<organism>
    <name type="scientific">Crotalus adamanteus</name>
    <name type="common">Eastern diamondback rattlesnake</name>
    <dbReference type="NCBI Taxonomy" id="8729"/>
    <lineage>
        <taxon>Eukaryota</taxon>
        <taxon>Metazoa</taxon>
        <taxon>Chordata</taxon>
        <taxon>Craniata</taxon>
        <taxon>Vertebrata</taxon>
        <taxon>Euteleostomi</taxon>
        <taxon>Lepidosauria</taxon>
        <taxon>Squamata</taxon>
        <taxon>Bifurcata</taxon>
        <taxon>Unidentata</taxon>
        <taxon>Episquamata</taxon>
        <taxon>Toxicofera</taxon>
        <taxon>Serpentes</taxon>
        <taxon>Colubroidea</taxon>
        <taxon>Viperidae</taxon>
        <taxon>Crotalinae</taxon>
        <taxon>Crotalus</taxon>
    </lineage>
</organism>
<protein>
    <recommendedName>
        <fullName>C-type lectin 6</fullName>
    </recommendedName>
</protein>
<sequence length="140" mass="16434">MGRLVFVSFGLLVVFLSLSGTGADCPSDWSSYEGHCYRVFQQEMTWEAAEKFCTQQHQKSHPVYFRSSEEVDFLVSILKFDLFWMGWRDIWNERRLQWSDGTKVNYKAWSAEPECVVCRATDNQWFSTSCSKTHNVICKF</sequence>
<evidence type="ECO:0000250" key="1"/>
<evidence type="ECO:0000255" key="2">
    <source>
        <dbReference type="PROSITE-ProRule" id="PRU00040"/>
    </source>
</evidence>
<evidence type="ECO:0000305" key="3"/>
<name>SL6_CROAD</name>
<comment type="function">
    <text evidence="1">Interferes with one step of hemostasis (modulation of platelet aggregation, or coagulation cascade, for example).</text>
</comment>
<comment type="subunit">
    <text evidence="1">Heteromultimer; disulfide-linked.</text>
</comment>
<comment type="subcellular location">
    <subcellularLocation>
        <location>Secreted</location>
    </subcellularLocation>
</comment>
<comment type="tissue specificity">
    <text>Expressed by the venom gland.</text>
</comment>
<comment type="similarity">
    <text evidence="3">Belongs to the snaclec family.</text>
</comment>
<dbReference type="EMBL" id="JU173654">
    <property type="protein sequence ID" value="AFJ49180.1"/>
    <property type="molecule type" value="mRNA"/>
</dbReference>
<dbReference type="SMR" id="J3SBN9"/>
<dbReference type="GO" id="GO:0005576">
    <property type="term" value="C:extracellular region"/>
    <property type="evidence" value="ECO:0007669"/>
    <property type="project" value="UniProtKB-SubCell"/>
</dbReference>
<dbReference type="GO" id="GO:0090729">
    <property type="term" value="F:toxin activity"/>
    <property type="evidence" value="ECO:0007669"/>
    <property type="project" value="UniProtKB-KW"/>
</dbReference>
<dbReference type="FunFam" id="3.10.100.10:FF:000087">
    <property type="entry name" value="Snaclec rhodocetin subunit delta"/>
    <property type="match status" value="1"/>
</dbReference>
<dbReference type="Gene3D" id="3.10.100.10">
    <property type="entry name" value="Mannose-Binding Protein A, subunit A"/>
    <property type="match status" value="1"/>
</dbReference>
<dbReference type="InterPro" id="IPR001304">
    <property type="entry name" value="C-type_lectin-like"/>
</dbReference>
<dbReference type="InterPro" id="IPR016186">
    <property type="entry name" value="C-type_lectin-like/link_sf"/>
</dbReference>
<dbReference type="InterPro" id="IPR050111">
    <property type="entry name" value="C-type_lectin/snaclec_domain"/>
</dbReference>
<dbReference type="InterPro" id="IPR018378">
    <property type="entry name" value="C-type_lectin_CS"/>
</dbReference>
<dbReference type="InterPro" id="IPR016187">
    <property type="entry name" value="CTDL_fold"/>
</dbReference>
<dbReference type="PANTHER" id="PTHR22803">
    <property type="entry name" value="MANNOSE, PHOSPHOLIPASE, LECTIN RECEPTOR RELATED"/>
    <property type="match status" value="1"/>
</dbReference>
<dbReference type="Pfam" id="PF00059">
    <property type="entry name" value="Lectin_C"/>
    <property type="match status" value="1"/>
</dbReference>
<dbReference type="SMART" id="SM00034">
    <property type="entry name" value="CLECT"/>
    <property type="match status" value="1"/>
</dbReference>
<dbReference type="SUPFAM" id="SSF56436">
    <property type="entry name" value="C-type lectin-like"/>
    <property type="match status" value="1"/>
</dbReference>
<dbReference type="PROSITE" id="PS00615">
    <property type="entry name" value="C_TYPE_LECTIN_1"/>
    <property type="match status" value="1"/>
</dbReference>
<dbReference type="PROSITE" id="PS50041">
    <property type="entry name" value="C_TYPE_LECTIN_2"/>
    <property type="match status" value="1"/>
</dbReference>
<accession>J3SBN9</accession>
<feature type="signal peptide" evidence="1">
    <location>
        <begin position="1"/>
        <end position="23"/>
    </location>
</feature>
<feature type="chain" id="PRO_0000425654" description="C-type lectin 6">
    <location>
        <begin position="24"/>
        <end position="140"/>
    </location>
</feature>
<feature type="domain" description="C-type lectin" evidence="2">
    <location>
        <begin position="32"/>
        <end position="139"/>
    </location>
</feature>
<feature type="disulfide bond" evidence="2">
    <location>
        <begin position="25"/>
        <end position="36"/>
    </location>
</feature>
<feature type="disulfide bond" evidence="2">
    <location>
        <begin position="53"/>
        <end position="138"/>
    </location>
</feature>
<feature type="disulfide bond" evidence="2">
    <location>
        <begin position="115"/>
        <end position="130"/>
    </location>
</feature>
<proteinExistence type="evidence at protein level"/>
<reference key="1">
    <citation type="journal article" date="2012" name="BMC Genomics">
        <title>The venom-gland transcriptome of the eastern diamondback rattlesnake (Crotalus adamanteus).</title>
        <authorList>
            <person name="Rokyta D.R."/>
            <person name="Lemmon A.R."/>
            <person name="Margres M.J."/>
            <person name="Aronow K."/>
        </authorList>
    </citation>
    <scope>NUCLEOTIDE SEQUENCE [MRNA]</scope>
    <source>
        <tissue>Venom gland</tissue>
    </source>
</reference>
<reference key="2">
    <citation type="journal article" date="2014" name="J. Proteomics">
        <title>Linking the transcriptome and proteome to characterize the venom of the eastern diamondback rattlesnake (Crotalus adamanteus).</title>
        <authorList>
            <person name="Margres M.J."/>
            <person name="McGivern J.J."/>
            <person name="Wray K.P."/>
            <person name="Seavy M."/>
            <person name="Calvin K."/>
            <person name="Rokyta D.R."/>
        </authorList>
    </citation>
    <scope>IDENTIFICATION BY MASS SPECTROMETRY</scope>
    <source>
        <tissue>Venom</tissue>
    </source>
</reference>
<keyword id="KW-1015">Disulfide bond</keyword>
<keyword id="KW-1199">Hemostasis impairing toxin</keyword>
<keyword id="KW-0964">Secreted</keyword>
<keyword id="KW-0732">Signal</keyword>
<keyword id="KW-0800">Toxin</keyword>